<comment type="function">
    <text evidence="1 3 4">Dual function regulator of gene expression; regulator of transcription and modulator of alternative splicing (PubMed:30698747). General coactivator of nuclear receptor-induced gene expression, including genes activated by the glucocorticoid receptor NR3C1 (PubMed:30698747). Binds to a subset of pre-mRNAs and to components of the spliceosome machinery to directly modulate basal alternative splicing; involved in simple and complex cassette exon splicing events (PubMed:30698747). Binds its own pre-mRNA and regulates its alternative splicing and degradation; one of the alternatively spliced products is a stable intronic sequence RNA (sisRNA) that binds the protein to regulate its ability to affect splicing (By similarity). Binding of the sisRNA stimulates phase separation and localization to nuclear speckles, which may contribute to activation of nuclear receptor-induced gene expression (By similarity). May also indirectly modulate alternative splicing (PubMed:30698747). Regulates transcription of genes involved in heart development, neuronal cell function, protein localization and chromatin localization (PubMed:30698747). Regulates splicing of genes involved in neurogenesis and chromatin organization (PubMed:30698747, PubMed:37612280). Essential for central nervous system development (PubMed:30698747, PubMed:37612280). Required for the estrogen-dependent expression of ESR1 target genes (By similarity). Can act in cooperation with MED1 (By similarity).</text>
</comment>
<comment type="subunit">
    <text evidence="1">Interacts with MED1; the interaction is direct (By similarity). Interacts with PUF60, U2AF2 and JMJD6; may interact with other proteins involved in RNA processing and splicing (By similarity).</text>
</comment>
<comment type="subcellular location">
    <subcellularLocation>
        <location evidence="3">Nucleus</location>
    </subcellularLocation>
    <subcellularLocation>
        <location evidence="3">Nucleus speckle</location>
    </subcellularLocation>
    <subcellularLocation>
        <location evidence="3">Chromosome</location>
    </subcellularLocation>
    <text evidence="1 3">Recruited, in an estrogen-dependent manner, to ESR1 target gene promoters (By similarity). Colocalizes with MED1 in nuclear speckles (By similarity). Binding of sisRNA promotes phase separation and localization to nuclear speckles (By similarity). Associated with glucocorticoid response elements of target genes, even in the absence of glucocorticoid receptor ligands (PubMed:30698747).</text>
</comment>
<comment type="alternative products">
    <event type="alternative splicing"/>
    <isoform>
        <id>Q3UL36-1</id>
        <name>1</name>
        <sequence type="displayed"/>
    </isoform>
    <isoform>
        <id>Q3UL36-2</id>
        <name>2</name>
        <sequence type="described" ref="VSP_025675 VSP_025676"/>
    </isoform>
</comment>
<comment type="tissue specificity">
    <text evidence="3 4">High expression levels in the neocortex, hippocampus and thalamus but low expression levels in the midbrain and hindbrain (at protein level) (PubMed:37612280). Ubiquitously expressed with highest expression levels in the central nervous system and low expression in uterus and pancreas (PubMed:30698747).</text>
</comment>
<comment type="developmental stage">
    <text evidence="4">Expressed in the cortical plate and the ventricular zone of the brain thorughout embryonic development (at protein level).</text>
</comment>
<comment type="induction">
    <text evidence="1">Post-transcriptionally regulated by autoregulatory feedback loop (By similarity). ARGLU1 protein binds ARGLU1 pre-mRNA and stimulates alternative splicing to produce two alternative RNA molecules (By similarity). The first includes an additional exon between exons 2 and 3 and is rapidly degraded by nonsense mediated decay (By similarity). The second, a stable intronic sequence RNA (sisRNA), retains the entirety of intron 2 and is able to bind ARGLU1 protein preventing it from stimulating alternative splicing (By similarity).</text>
</comment>
<comment type="domain">
    <text evidence="1">The N-terminal region can bind RNA; preferentially binds 5'-CGG[AG]GG-3' motifs.</text>
</comment>
<comment type="domain">
    <text evidence="1">The non-classical LXXLL motifs are not required for nuclear receptor coactivator activity.</text>
</comment>
<comment type="domain">
    <text evidence="1">The C-terminal region is necessary and sufficient for regulation of transcription and nuclear receptor coactivator activity (By similarity). The C-terminal region is not required for RNA binding (By similarity).</text>
</comment>
<comment type="disruption phenotype">
    <text evidence="3 4">Embryonic lethal between stage E9.5 and E12.5 (PubMed:30698747). Embryos at stage E9 show a developmental delay of about half a day and their brains show increased levels of apoptosis (PubMed:30698747). Conditional knockout in cortical excitatory neural progenitors and their progeny results in microcephaly with mislocalization of neural progenitor cells and increased levels of apoptosis in the cortex (PubMed:37612280).</text>
</comment>
<comment type="similarity">
    <text evidence="6">Belongs to the ARGLU1 family.</text>
</comment>
<comment type="sequence caution" evidence="6">
    <conflict type="miscellaneous discrepancy">
        <sequence resource="EMBL-CDS" id="BAE26615"/>
    </conflict>
    <text>Chimeric cDNA.</text>
</comment>
<feature type="chain" id="PRO_0000288439" description="Arginine and glutamate-rich protein 1">
    <location>
        <begin position="1"/>
        <end position="271"/>
    </location>
</feature>
<feature type="region of interest" description="Disordered" evidence="2">
    <location>
        <begin position="1"/>
        <end position="112"/>
    </location>
</feature>
<feature type="region of interest" description="Necessary and sufficient for RNA binding" evidence="1">
    <location>
        <begin position="1"/>
        <end position="72"/>
    </location>
</feature>
<feature type="region of interest" description="Necessary and sufficient for transcriptional regulation" evidence="1">
    <location>
        <begin position="73"/>
        <end position="271"/>
    </location>
</feature>
<feature type="region of interest" description="Disordered" evidence="2">
    <location>
        <begin position="236"/>
        <end position="271"/>
    </location>
</feature>
<feature type="short sequence motif" description="LXXLL motif 1; degenerate" evidence="1">
    <location>
        <begin position="170"/>
        <end position="174"/>
    </location>
</feature>
<feature type="short sequence motif" description="LXXLL motif 2; degenerate" evidence="1">
    <location>
        <begin position="199"/>
        <end position="203"/>
    </location>
</feature>
<feature type="compositionally biased region" description="Basic residues" evidence="2">
    <location>
        <begin position="1"/>
        <end position="29"/>
    </location>
</feature>
<feature type="compositionally biased region" description="Basic residues" evidence="2">
    <location>
        <begin position="37"/>
        <end position="58"/>
    </location>
</feature>
<feature type="compositionally biased region" description="Basic and acidic residues" evidence="2">
    <location>
        <begin position="66"/>
        <end position="82"/>
    </location>
</feature>
<feature type="compositionally biased region" description="Basic and acidic residues" evidence="2">
    <location>
        <begin position="91"/>
        <end position="112"/>
    </location>
</feature>
<feature type="compositionally biased region" description="Basic and acidic residues" evidence="2">
    <location>
        <begin position="236"/>
        <end position="251"/>
    </location>
</feature>
<feature type="modified residue" description="Phosphoserine" evidence="1">
    <location>
        <position position="58"/>
    </location>
</feature>
<feature type="modified residue" description="Phosphoserine" evidence="1">
    <location>
        <position position="60"/>
    </location>
</feature>
<feature type="modified residue" description="Phosphothreonine" evidence="1">
    <location>
        <position position="61"/>
    </location>
</feature>
<feature type="modified residue" description="Phosphoserine" evidence="1">
    <location>
        <position position="74"/>
    </location>
</feature>
<feature type="modified residue" description="Phosphoserine" evidence="8">
    <location>
        <position position="75"/>
    </location>
</feature>
<feature type="modified residue" description="Phosphoserine" evidence="1">
    <location>
        <position position="264"/>
    </location>
</feature>
<feature type="splice variant" id="VSP_025675" description="In isoform 2." evidence="5">
    <location>
        <begin position="52"/>
        <end position="69"/>
    </location>
</feature>
<feature type="splice variant" id="VSP_025676" description="In isoform 2." evidence="5">
    <original>EEERAKREELERILEENNRKIAEAQAKLAEEQLRIVEEQRKIHEERMKLEQERQRQQKEEQKIILGKGKSRPKLSFSLKTQD</original>
    <variation>VTLGRLESRDSPWQNFQCQVCLLLSPERDGMRLS</variation>
    <location>
        <begin position="190"/>
        <end position="271"/>
    </location>
</feature>
<organism evidence="7">
    <name type="scientific">Mus musculus</name>
    <name type="common">Mouse</name>
    <dbReference type="NCBI Taxonomy" id="10090"/>
    <lineage>
        <taxon>Eukaryota</taxon>
        <taxon>Metazoa</taxon>
        <taxon>Chordata</taxon>
        <taxon>Craniata</taxon>
        <taxon>Vertebrata</taxon>
        <taxon>Euteleostomi</taxon>
        <taxon>Mammalia</taxon>
        <taxon>Eutheria</taxon>
        <taxon>Euarchontoglires</taxon>
        <taxon>Glires</taxon>
        <taxon>Rodentia</taxon>
        <taxon>Myomorpha</taxon>
        <taxon>Muroidea</taxon>
        <taxon>Muridae</taxon>
        <taxon>Murinae</taxon>
        <taxon>Mus</taxon>
        <taxon>Mus</taxon>
    </lineage>
</organism>
<sequence length="271" mass="32887">MGRSRSRSSSRSKHTKSSKHNKKRSRSRSRSRDKERVRKRSKSRESKRNRRRESRSRSRSTNAAASRRERERASSPPDRIDIFGRTVSKRSSLDEKQKREEEEKKAEFERQRKIRQQEIEEKLIEEETARRVEELVAKRVEEELEKRKDEIEREVLRRVEEAKRIMEKQLLEELERQRQAELAAQKAREEEERAKREELERILEENNRKIAEAQAKLAEEQLRIVEEQRKIHEERMKLEQERQRQQKEEQKIILGKGKSRPKLSFSLKTQD</sequence>
<dbReference type="EMBL" id="AC138368">
    <property type="status" value="NOT_ANNOTATED_CDS"/>
    <property type="molecule type" value="Genomic_DNA"/>
</dbReference>
<dbReference type="EMBL" id="BC046971">
    <property type="protein sequence ID" value="AAH46971.1"/>
    <property type="molecule type" value="mRNA"/>
</dbReference>
<dbReference type="EMBL" id="AK145733">
    <property type="protein sequence ID" value="BAE26615.1"/>
    <property type="status" value="ALT_SEQ"/>
    <property type="molecule type" value="mRNA"/>
</dbReference>
<dbReference type="CCDS" id="CCDS40215.1">
    <molecule id="Q3UL36-1"/>
</dbReference>
<dbReference type="RefSeq" id="NP_789819.2">
    <molecule id="Q3UL36-1"/>
    <property type="nucleotide sequence ID" value="NM_176849.3"/>
</dbReference>
<dbReference type="SMR" id="Q3UL36"/>
<dbReference type="BioGRID" id="231486">
    <property type="interactions" value="6"/>
</dbReference>
<dbReference type="FunCoup" id="Q3UL36">
    <property type="interactions" value="4623"/>
</dbReference>
<dbReference type="IntAct" id="Q3UL36">
    <property type="interactions" value="150"/>
</dbReference>
<dbReference type="MINT" id="Q3UL36"/>
<dbReference type="STRING" id="10090.ENSMUSP00000039493"/>
<dbReference type="iPTMnet" id="Q3UL36"/>
<dbReference type="PhosphoSitePlus" id="Q3UL36"/>
<dbReference type="jPOST" id="Q3UL36"/>
<dbReference type="PaxDb" id="10090-ENSMUSP00000039493"/>
<dbReference type="PeptideAtlas" id="Q3UL36"/>
<dbReference type="ProteomicsDB" id="265079">
    <molecule id="Q3UL36-1"/>
</dbReference>
<dbReference type="ProteomicsDB" id="265080">
    <molecule id="Q3UL36-2"/>
</dbReference>
<dbReference type="Pumba" id="Q3UL36"/>
<dbReference type="Antibodypedia" id="25410">
    <property type="antibodies" value="86 antibodies from 19 providers"/>
</dbReference>
<dbReference type="Ensembl" id="ENSMUST00000048545.10">
    <molecule id="Q3UL36-1"/>
    <property type="protein sequence ID" value="ENSMUSP00000039493.9"/>
    <property type="gene ID" value="ENSMUSG00000040459.12"/>
</dbReference>
<dbReference type="GeneID" id="234023"/>
<dbReference type="KEGG" id="mmu:234023"/>
<dbReference type="UCSC" id="uc009kug.1">
    <molecule id="Q3UL36-1"/>
    <property type="organism name" value="mouse"/>
</dbReference>
<dbReference type="AGR" id="MGI:2442985"/>
<dbReference type="CTD" id="55082"/>
<dbReference type="MGI" id="MGI:2442985">
    <property type="gene designation" value="Arglu1"/>
</dbReference>
<dbReference type="VEuPathDB" id="HostDB:ENSMUSG00000040459"/>
<dbReference type="eggNOG" id="ENOG502QPR5">
    <property type="taxonomic scope" value="Eukaryota"/>
</dbReference>
<dbReference type="GeneTree" id="ENSGT00730000111249"/>
<dbReference type="HOGENOM" id="CLU_076749_0_0_1"/>
<dbReference type="InParanoid" id="Q3UL36"/>
<dbReference type="OMA" id="VNSHGRH"/>
<dbReference type="PhylomeDB" id="Q3UL36"/>
<dbReference type="TreeFam" id="TF324123"/>
<dbReference type="BioGRID-ORCS" id="234023">
    <property type="hits" value="18 hits in 77 CRISPR screens"/>
</dbReference>
<dbReference type="ChiTaRS" id="Arglu1">
    <property type="organism name" value="mouse"/>
</dbReference>
<dbReference type="PRO" id="PR:Q3UL36"/>
<dbReference type="Proteomes" id="UP000000589">
    <property type="component" value="Chromosome 8"/>
</dbReference>
<dbReference type="RNAct" id="Q3UL36">
    <property type="molecule type" value="protein"/>
</dbReference>
<dbReference type="Bgee" id="ENSMUSG00000040459">
    <property type="expression patterns" value="Expressed in renal corpuscle and 267 other cell types or tissues"/>
</dbReference>
<dbReference type="ExpressionAtlas" id="Q3UL36">
    <property type="expression patterns" value="baseline and differential"/>
</dbReference>
<dbReference type="GO" id="GO:0005694">
    <property type="term" value="C:chromosome"/>
    <property type="evidence" value="ECO:0007669"/>
    <property type="project" value="UniProtKB-SubCell"/>
</dbReference>
<dbReference type="GO" id="GO:0005829">
    <property type="term" value="C:cytosol"/>
    <property type="evidence" value="ECO:0007669"/>
    <property type="project" value="Ensembl"/>
</dbReference>
<dbReference type="GO" id="GO:0005739">
    <property type="term" value="C:mitochondrion"/>
    <property type="evidence" value="ECO:0007669"/>
    <property type="project" value="Ensembl"/>
</dbReference>
<dbReference type="GO" id="GO:0016607">
    <property type="term" value="C:nuclear speck"/>
    <property type="evidence" value="ECO:0000314"/>
    <property type="project" value="UniProtKB"/>
</dbReference>
<dbReference type="GO" id="GO:0036002">
    <property type="term" value="F:pre-mRNA binding"/>
    <property type="evidence" value="ECO:0000314"/>
    <property type="project" value="UniProtKB"/>
</dbReference>
<dbReference type="GO" id="GO:0003713">
    <property type="term" value="F:transcription coactivator activity"/>
    <property type="evidence" value="ECO:0000315"/>
    <property type="project" value="UniProtKB"/>
</dbReference>
<dbReference type="GO" id="GO:0006397">
    <property type="term" value="P:mRNA processing"/>
    <property type="evidence" value="ECO:0007669"/>
    <property type="project" value="UniProtKB-KW"/>
</dbReference>
<dbReference type="GO" id="GO:0000381">
    <property type="term" value="P:regulation of alternative mRNA splicing, via spliceosome"/>
    <property type="evidence" value="ECO:0000315"/>
    <property type="project" value="UniProtKB"/>
</dbReference>
<dbReference type="GO" id="GO:0008380">
    <property type="term" value="P:RNA splicing"/>
    <property type="evidence" value="ECO:0007669"/>
    <property type="project" value="UniProtKB-KW"/>
</dbReference>
<dbReference type="InterPro" id="IPR033371">
    <property type="entry name" value="ARGLU1"/>
</dbReference>
<dbReference type="PANTHER" id="PTHR31711">
    <property type="entry name" value="ARGININE AND GLUTAMATE-RICH PROTEIN 1"/>
    <property type="match status" value="1"/>
</dbReference>
<dbReference type="PANTHER" id="PTHR31711:SF1">
    <property type="entry name" value="ARGININE AND GLUTAMATE-RICH PROTEIN 1"/>
    <property type="match status" value="1"/>
</dbReference>
<dbReference type="Pfam" id="PF15346">
    <property type="entry name" value="ARGLU"/>
    <property type="match status" value="1"/>
</dbReference>
<evidence type="ECO:0000250" key="1">
    <source>
        <dbReference type="UniProtKB" id="Q9NWB6"/>
    </source>
</evidence>
<evidence type="ECO:0000256" key="2">
    <source>
        <dbReference type="SAM" id="MobiDB-lite"/>
    </source>
</evidence>
<evidence type="ECO:0000269" key="3">
    <source>
    </source>
</evidence>
<evidence type="ECO:0000269" key="4">
    <source>
    </source>
</evidence>
<evidence type="ECO:0000303" key="5">
    <source>
    </source>
</evidence>
<evidence type="ECO:0000305" key="6"/>
<evidence type="ECO:0000312" key="7">
    <source>
        <dbReference type="Proteomes" id="UP000000589"/>
    </source>
</evidence>
<evidence type="ECO:0007744" key="8">
    <source>
    </source>
</evidence>
<proteinExistence type="evidence at protein level"/>
<gene>
    <name type="primary">Arglu1</name>
</gene>
<accession>Q3UL36</accession>
<accession>Q80XJ0</accession>
<keyword id="KW-0025">Alternative splicing</keyword>
<keyword id="KW-0158">Chromosome</keyword>
<keyword id="KW-0507">mRNA processing</keyword>
<keyword id="KW-0508">mRNA splicing</keyword>
<keyword id="KW-0539">Nucleus</keyword>
<keyword id="KW-0597">Phosphoprotein</keyword>
<keyword id="KW-1185">Reference proteome</keyword>
<keyword id="KW-0694">RNA-binding</keyword>
<name>ARGL1_MOUSE</name>
<protein>
    <recommendedName>
        <fullName>Arginine and glutamate-rich protein 1</fullName>
    </recommendedName>
</protein>
<reference key="1">
    <citation type="journal article" date="2009" name="PLoS Biol.">
        <title>Lineage-specific biology revealed by a finished genome assembly of the mouse.</title>
        <authorList>
            <person name="Church D.M."/>
            <person name="Goodstadt L."/>
            <person name="Hillier L.W."/>
            <person name="Zody M.C."/>
            <person name="Goldstein S."/>
            <person name="She X."/>
            <person name="Bult C.J."/>
            <person name="Agarwala R."/>
            <person name="Cherry J.L."/>
            <person name="DiCuccio M."/>
            <person name="Hlavina W."/>
            <person name="Kapustin Y."/>
            <person name="Meric P."/>
            <person name="Maglott D."/>
            <person name="Birtle Z."/>
            <person name="Marques A.C."/>
            <person name="Graves T."/>
            <person name="Zhou S."/>
            <person name="Teague B."/>
            <person name="Potamousis K."/>
            <person name="Churas C."/>
            <person name="Place M."/>
            <person name="Herschleb J."/>
            <person name="Runnheim R."/>
            <person name="Forrest D."/>
            <person name="Amos-Landgraf J."/>
            <person name="Schwartz D.C."/>
            <person name="Cheng Z."/>
            <person name="Lindblad-Toh K."/>
            <person name="Eichler E.E."/>
            <person name="Ponting C.P."/>
        </authorList>
    </citation>
    <scope>NUCLEOTIDE SEQUENCE [LARGE SCALE GENOMIC DNA]</scope>
    <source>
        <strain>C57BL/6J</strain>
    </source>
</reference>
<reference key="2">
    <citation type="journal article" date="2004" name="Genome Res.">
        <title>The status, quality, and expansion of the NIH full-length cDNA project: the Mammalian Gene Collection (MGC).</title>
        <authorList>
            <consortium name="The MGC Project Team"/>
        </authorList>
    </citation>
    <scope>NUCLEOTIDE SEQUENCE [LARGE SCALE MRNA] (ISOFORM 2)</scope>
    <source>
        <tissue>Eye</tissue>
    </source>
</reference>
<reference key="3">
    <citation type="journal article" date="2005" name="Science">
        <title>The transcriptional landscape of the mammalian genome.</title>
        <authorList>
            <person name="Carninci P."/>
            <person name="Kasukawa T."/>
            <person name="Katayama S."/>
            <person name="Gough J."/>
            <person name="Frith M.C."/>
            <person name="Maeda N."/>
            <person name="Oyama R."/>
            <person name="Ravasi T."/>
            <person name="Lenhard B."/>
            <person name="Wells C."/>
            <person name="Kodzius R."/>
            <person name="Shimokawa K."/>
            <person name="Bajic V.B."/>
            <person name="Brenner S.E."/>
            <person name="Batalov S."/>
            <person name="Forrest A.R."/>
            <person name="Zavolan M."/>
            <person name="Davis M.J."/>
            <person name="Wilming L.G."/>
            <person name="Aidinis V."/>
            <person name="Allen J.E."/>
            <person name="Ambesi-Impiombato A."/>
            <person name="Apweiler R."/>
            <person name="Aturaliya R.N."/>
            <person name="Bailey T.L."/>
            <person name="Bansal M."/>
            <person name="Baxter L."/>
            <person name="Beisel K.W."/>
            <person name="Bersano T."/>
            <person name="Bono H."/>
            <person name="Chalk A.M."/>
            <person name="Chiu K.P."/>
            <person name="Choudhary V."/>
            <person name="Christoffels A."/>
            <person name="Clutterbuck D.R."/>
            <person name="Crowe M.L."/>
            <person name="Dalla E."/>
            <person name="Dalrymple B.P."/>
            <person name="de Bono B."/>
            <person name="Della Gatta G."/>
            <person name="di Bernardo D."/>
            <person name="Down T."/>
            <person name="Engstrom P."/>
            <person name="Fagiolini M."/>
            <person name="Faulkner G."/>
            <person name="Fletcher C.F."/>
            <person name="Fukushima T."/>
            <person name="Furuno M."/>
            <person name="Futaki S."/>
            <person name="Gariboldi M."/>
            <person name="Georgii-Hemming P."/>
            <person name="Gingeras T.R."/>
            <person name="Gojobori T."/>
            <person name="Green R.E."/>
            <person name="Gustincich S."/>
            <person name="Harbers M."/>
            <person name="Hayashi Y."/>
            <person name="Hensch T.K."/>
            <person name="Hirokawa N."/>
            <person name="Hill D."/>
            <person name="Huminiecki L."/>
            <person name="Iacono M."/>
            <person name="Ikeo K."/>
            <person name="Iwama A."/>
            <person name="Ishikawa T."/>
            <person name="Jakt M."/>
            <person name="Kanapin A."/>
            <person name="Katoh M."/>
            <person name="Kawasawa Y."/>
            <person name="Kelso J."/>
            <person name="Kitamura H."/>
            <person name="Kitano H."/>
            <person name="Kollias G."/>
            <person name="Krishnan S.P."/>
            <person name="Kruger A."/>
            <person name="Kummerfeld S.K."/>
            <person name="Kurochkin I.V."/>
            <person name="Lareau L.F."/>
            <person name="Lazarevic D."/>
            <person name="Lipovich L."/>
            <person name="Liu J."/>
            <person name="Liuni S."/>
            <person name="McWilliam S."/>
            <person name="Madan Babu M."/>
            <person name="Madera M."/>
            <person name="Marchionni L."/>
            <person name="Matsuda H."/>
            <person name="Matsuzawa S."/>
            <person name="Miki H."/>
            <person name="Mignone F."/>
            <person name="Miyake S."/>
            <person name="Morris K."/>
            <person name="Mottagui-Tabar S."/>
            <person name="Mulder N."/>
            <person name="Nakano N."/>
            <person name="Nakauchi H."/>
            <person name="Ng P."/>
            <person name="Nilsson R."/>
            <person name="Nishiguchi S."/>
            <person name="Nishikawa S."/>
            <person name="Nori F."/>
            <person name="Ohara O."/>
            <person name="Okazaki Y."/>
            <person name="Orlando V."/>
            <person name="Pang K.C."/>
            <person name="Pavan W.J."/>
            <person name="Pavesi G."/>
            <person name="Pesole G."/>
            <person name="Petrovsky N."/>
            <person name="Piazza S."/>
            <person name="Reed J."/>
            <person name="Reid J.F."/>
            <person name="Ring B.Z."/>
            <person name="Ringwald M."/>
            <person name="Rost B."/>
            <person name="Ruan Y."/>
            <person name="Salzberg S.L."/>
            <person name="Sandelin A."/>
            <person name="Schneider C."/>
            <person name="Schoenbach C."/>
            <person name="Sekiguchi K."/>
            <person name="Semple C.A."/>
            <person name="Seno S."/>
            <person name="Sessa L."/>
            <person name="Sheng Y."/>
            <person name="Shibata Y."/>
            <person name="Shimada H."/>
            <person name="Shimada K."/>
            <person name="Silva D."/>
            <person name="Sinclair B."/>
            <person name="Sperling S."/>
            <person name="Stupka E."/>
            <person name="Sugiura K."/>
            <person name="Sultana R."/>
            <person name="Takenaka Y."/>
            <person name="Taki K."/>
            <person name="Tammoja K."/>
            <person name="Tan S.L."/>
            <person name="Tang S."/>
            <person name="Taylor M.S."/>
            <person name="Tegner J."/>
            <person name="Teichmann S.A."/>
            <person name="Ueda H.R."/>
            <person name="van Nimwegen E."/>
            <person name="Verardo R."/>
            <person name="Wei C.L."/>
            <person name="Yagi K."/>
            <person name="Yamanishi H."/>
            <person name="Zabarovsky E."/>
            <person name="Zhu S."/>
            <person name="Zimmer A."/>
            <person name="Hide W."/>
            <person name="Bult C."/>
            <person name="Grimmond S.M."/>
            <person name="Teasdale R.D."/>
            <person name="Liu E.T."/>
            <person name="Brusic V."/>
            <person name="Quackenbush J."/>
            <person name="Wahlestedt C."/>
            <person name="Mattick J.S."/>
            <person name="Hume D.A."/>
            <person name="Kai C."/>
            <person name="Sasaki D."/>
            <person name="Tomaru Y."/>
            <person name="Fukuda S."/>
            <person name="Kanamori-Katayama M."/>
            <person name="Suzuki M."/>
            <person name="Aoki J."/>
            <person name="Arakawa T."/>
            <person name="Iida J."/>
            <person name="Imamura K."/>
            <person name="Itoh M."/>
            <person name="Kato T."/>
            <person name="Kawaji H."/>
            <person name="Kawagashira N."/>
            <person name="Kawashima T."/>
            <person name="Kojima M."/>
            <person name="Kondo S."/>
            <person name="Konno H."/>
            <person name="Nakano K."/>
            <person name="Ninomiya N."/>
            <person name="Nishio T."/>
            <person name="Okada M."/>
            <person name="Plessy C."/>
            <person name="Shibata K."/>
            <person name="Shiraki T."/>
            <person name="Suzuki S."/>
            <person name="Tagami M."/>
            <person name="Waki K."/>
            <person name="Watahiki A."/>
            <person name="Okamura-Oho Y."/>
            <person name="Suzuki H."/>
            <person name="Kawai J."/>
            <person name="Hayashizaki Y."/>
        </authorList>
    </citation>
    <scope>NUCLEOTIDE SEQUENCE [LARGE SCALE MRNA] OF 1-190</scope>
    <source>
        <strain>C57BL/6J</strain>
    </source>
</reference>
<reference key="4">
    <citation type="journal article" date="2009" name="Mol. Cell. Proteomics">
        <title>Large scale localization of protein phosphorylation by use of electron capture dissociation mass spectrometry.</title>
        <authorList>
            <person name="Sweet S.M."/>
            <person name="Bailey C.M."/>
            <person name="Cunningham D.L."/>
            <person name="Heath J.K."/>
            <person name="Cooper H.J."/>
        </authorList>
    </citation>
    <scope>PHOSPHORYLATION [LARGE SCALE ANALYSIS] AT SER-75</scope>
    <scope>IDENTIFICATION BY MASS SPECTROMETRY [LARGE SCALE ANALYSIS]</scope>
    <source>
        <tissue>Embryonic fibroblast</tissue>
    </source>
</reference>
<reference key="5">
    <citation type="journal article" date="2019" name="Nucleic Acids Res.">
        <title>ARGLU1 is a transcriptional coactivator and splicing regulator important for stress hormone signaling and development.</title>
        <authorList>
            <person name="Magomedova L."/>
            <person name="Tiefenbach J."/>
            <person name="Zilberman E."/>
            <person name="Le Billan F."/>
            <person name="Voisin V."/>
            <person name="Saikali M."/>
            <person name="Boivin V."/>
            <person name="Robitaille M."/>
            <person name="Gueroussov S."/>
            <person name="Irimia M."/>
            <person name="Ray D."/>
            <person name="Patel R."/>
            <person name="Xu C."/>
            <person name="Jeyasuria P."/>
            <person name="Bader G.D."/>
            <person name="Hughes T.R."/>
            <person name="Morris Q.D."/>
            <person name="Scott M.S."/>
            <person name="Krause H."/>
            <person name="Angers S."/>
            <person name="Blencowe B.J."/>
            <person name="Cummins C.L."/>
        </authorList>
    </citation>
    <scope>FUNCTION</scope>
    <scope>SUBCELLULAR LOCATION</scope>
    <scope>TISSUE SPECIFICITY</scope>
    <scope>DISRUPTION PHENOTYPE</scope>
</reference>
<reference key="6">
    <citation type="journal article" date="2023" name="Cell Death Dis.">
        <title>Deletion of ARGLU1 causes global defects in alternative splicing in vivo and mouse cortical malformations primarily via apoptosis.</title>
        <authorList>
            <person name="Yao F."/>
            <person name="Huang S."/>
            <person name="Liu J."/>
            <person name="Tan C."/>
            <person name="Xu M."/>
            <person name="Wang D."/>
            <person name="Huang M."/>
            <person name="Zhu Y."/>
            <person name="Huang X."/>
            <person name="He S."/>
        </authorList>
    </citation>
    <scope>FUNCTION</scope>
    <scope>TISSUE SPECIFICITY</scope>
    <scope>DEVELOPMENTAL STAGE</scope>
    <scope>DISRUPTION PHENOTYPE</scope>
</reference>